<keyword id="KW-0067">ATP-binding</keyword>
<keyword id="KW-0143">Chaperone</keyword>
<keyword id="KW-0963">Cytoplasm</keyword>
<keyword id="KW-0547">Nucleotide-binding</keyword>
<keyword id="KW-1267">Proteomics identification</keyword>
<keyword id="KW-1185">Reference proteome</keyword>
<accession>Q0VDF9</accession>
<accession>A8K8F8</accession>
<accession>B0YIY9</accession>
<accession>Q9P0X2</accession>
<accession>Q9UI07</accession>
<reference key="1">
    <citation type="journal article" date="2004" name="Blood">
        <title>Novel heat shock protein Hsp70L1 activates dendritic cells and acts as a Th1 polarizing adjuvant.</title>
        <authorList>
            <person name="Wan T."/>
            <person name="Zhou X."/>
            <person name="Chen G."/>
            <person name="An H."/>
            <person name="Chen T."/>
            <person name="Zhang W."/>
            <person name="Liu S."/>
            <person name="Jiang Y."/>
            <person name="Yang F."/>
            <person name="Wu Y."/>
            <person name="Cao X."/>
        </authorList>
    </citation>
    <scope>NUCLEOTIDE SEQUENCE [MRNA]</scope>
</reference>
<reference key="2">
    <citation type="journal article" date="2000" name="Proc. Natl. Acad. Sci. U.S.A.">
        <title>Gene expression profiling in the human hypothalamus-pituitary-adrenal axis and full-length cDNA cloning.</title>
        <authorList>
            <person name="Hu R.-M."/>
            <person name="Han Z.-G."/>
            <person name="Song H.-D."/>
            <person name="Peng Y.-D."/>
            <person name="Huang Q.-H."/>
            <person name="Ren S.-X."/>
            <person name="Gu Y.-J."/>
            <person name="Huang C.-H."/>
            <person name="Li Y.-B."/>
            <person name="Jiang C.-L."/>
            <person name="Fu G."/>
            <person name="Zhang Q.-H."/>
            <person name="Gu B.-W."/>
            <person name="Dai M."/>
            <person name="Mao Y.-F."/>
            <person name="Gao G.-F."/>
            <person name="Rong R."/>
            <person name="Ye M."/>
            <person name="Zhou J."/>
            <person name="Xu S.-H."/>
            <person name="Gu J."/>
            <person name="Shi J.-X."/>
            <person name="Jin W.-R."/>
            <person name="Zhang C.-K."/>
            <person name="Wu T.-M."/>
            <person name="Huang G.-Y."/>
            <person name="Chen Z."/>
            <person name="Chen M.-D."/>
            <person name="Chen J.-L."/>
        </authorList>
    </citation>
    <scope>NUCLEOTIDE SEQUENCE [LARGE SCALE MRNA]</scope>
    <source>
        <tissue>Adrenal gland</tissue>
    </source>
</reference>
<reference key="3">
    <citation type="journal article" date="2004" name="Nat. Genet.">
        <title>Complete sequencing and characterization of 21,243 full-length human cDNAs.</title>
        <authorList>
            <person name="Ota T."/>
            <person name="Suzuki Y."/>
            <person name="Nishikawa T."/>
            <person name="Otsuki T."/>
            <person name="Sugiyama T."/>
            <person name="Irie R."/>
            <person name="Wakamatsu A."/>
            <person name="Hayashi K."/>
            <person name="Sato H."/>
            <person name="Nagai K."/>
            <person name="Kimura K."/>
            <person name="Makita H."/>
            <person name="Sekine M."/>
            <person name="Obayashi M."/>
            <person name="Nishi T."/>
            <person name="Shibahara T."/>
            <person name="Tanaka T."/>
            <person name="Ishii S."/>
            <person name="Yamamoto J."/>
            <person name="Saito K."/>
            <person name="Kawai Y."/>
            <person name="Isono Y."/>
            <person name="Nakamura Y."/>
            <person name="Nagahari K."/>
            <person name="Murakami K."/>
            <person name="Yasuda T."/>
            <person name="Iwayanagi T."/>
            <person name="Wagatsuma M."/>
            <person name="Shiratori A."/>
            <person name="Sudo H."/>
            <person name="Hosoiri T."/>
            <person name="Kaku Y."/>
            <person name="Kodaira H."/>
            <person name="Kondo H."/>
            <person name="Sugawara M."/>
            <person name="Takahashi M."/>
            <person name="Kanda K."/>
            <person name="Yokoi T."/>
            <person name="Furuya T."/>
            <person name="Kikkawa E."/>
            <person name="Omura Y."/>
            <person name="Abe K."/>
            <person name="Kamihara K."/>
            <person name="Katsuta N."/>
            <person name="Sato K."/>
            <person name="Tanikawa M."/>
            <person name="Yamazaki M."/>
            <person name="Ninomiya K."/>
            <person name="Ishibashi T."/>
            <person name="Yamashita H."/>
            <person name="Murakawa K."/>
            <person name="Fujimori K."/>
            <person name="Tanai H."/>
            <person name="Kimata M."/>
            <person name="Watanabe M."/>
            <person name="Hiraoka S."/>
            <person name="Chiba Y."/>
            <person name="Ishida S."/>
            <person name="Ono Y."/>
            <person name="Takiguchi S."/>
            <person name="Watanabe S."/>
            <person name="Yosida M."/>
            <person name="Hotuta T."/>
            <person name="Kusano J."/>
            <person name="Kanehori K."/>
            <person name="Takahashi-Fujii A."/>
            <person name="Hara H."/>
            <person name="Tanase T.-O."/>
            <person name="Nomura Y."/>
            <person name="Togiya S."/>
            <person name="Komai F."/>
            <person name="Hara R."/>
            <person name="Takeuchi K."/>
            <person name="Arita M."/>
            <person name="Imose N."/>
            <person name="Musashino K."/>
            <person name="Yuuki H."/>
            <person name="Oshima A."/>
            <person name="Sasaki N."/>
            <person name="Aotsuka S."/>
            <person name="Yoshikawa Y."/>
            <person name="Matsunawa H."/>
            <person name="Ichihara T."/>
            <person name="Shiohata N."/>
            <person name="Sano S."/>
            <person name="Moriya S."/>
            <person name="Momiyama H."/>
            <person name="Satoh N."/>
            <person name="Takami S."/>
            <person name="Terashima Y."/>
            <person name="Suzuki O."/>
            <person name="Nakagawa S."/>
            <person name="Senoh A."/>
            <person name="Mizoguchi H."/>
            <person name="Goto Y."/>
            <person name="Shimizu F."/>
            <person name="Wakebe H."/>
            <person name="Hishigaki H."/>
            <person name="Watanabe T."/>
            <person name="Sugiyama A."/>
            <person name="Takemoto M."/>
            <person name="Kawakami B."/>
            <person name="Yamazaki M."/>
            <person name="Watanabe K."/>
            <person name="Kumagai A."/>
            <person name="Itakura S."/>
            <person name="Fukuzumi Y."/>
            <person name="Fujimori Y."/>
            <person name="Komiyama M."/>
            <person name="Tashiro H."/>
            <person name="Tanigami A."/>
            <person name="Fujiwara T."/>
            <person name="Ono T."/>
            <person name="Yamada K."/>
            <person name="Fujii Y."/>
            <person name="Ozaki K."/>
            <person name="Hirao M."/>
            <person name="Ohmori Y."/>
            <person name="Kawabata A."/>
            <person name="Hikiji T."/>
            <person name="Kobatake N."/>
            <person name="Inagaki H."/>
            <person name="Ikema Y."/>
            <person name="Okamoto S."/>
            <person name="Okitani R."/>
            <person name="Kawakami T."/>
            <person name="Noguchi S."/>
            <person name="Itoh T."/>
            <person name="Shigeta K."/>
            <person name="Senba T."/>
            <person name="Matsumura K."/>
            <person name="Nakajima Y."/>
            <person name="Mizuno T."/>
            <person name="Morinaga M."/>
            <person name="Sasaki M."/>
            <person name="Togashi T."/>
            <person name="Oyama M."/>
            <person name="Hata H."/>
            <person name="Watanabe M."/>
            <person name="Komatsu T."/>
            <person name="Mizushima-Sugano J."/>
            <person name="Satoh T."/>
            <person name="Shirai Y."/>
            <person name="Takahashi Y."/>
            <person name="Nakagawa K."/>
            <person name="Okumura K."/>
            <person name="Nagase T."/>
            <person name="Nomura N."/>
            <person name="Kikuchi H."/>
            <person name="Masuho Y."/>
            <person name="Yamashita R."/>
            <person name="Nakai K."/>
            <person name="Yada T."/>
            <person name="Nakamura Y."/>
            <person name="Ohara O."/>
            <person name="Isogai T."/>
            <person name="Sugano S."/>
        </authorList>
    </citation>
    <scope>NUCLEOTIDE SEQUENCE [LARGE SCALE MRNA]</scope>
    <source>
        <tissue>Testis</tissue>
    </source>
</reference>
<reference key="4">
    <citation type="submission" date="2007-02" db="EMBL/GenBank/DDBJ databases">
        <authorList>
            <consortium name="NHLBI resequencing and genotyping service (RS&amp;G)"/>
        </authorList>
    </citation>
    <scope>NUCLEOTIDE SEQUENCE [GENOMIC DNA]</scope>
</reference>
<reference key="5">
    <citation type="journal article" date="2004" name="Nature">
        <title>The DNA sequence and comparative analysis of human chromosome 10.</title>
        <authorList>
            <person name="Deloukas P."/>
            <person name="Earthrowl M.E."/>
            <person name="Grafham D.V."/>
            <person name="Rubenfield M."/>
            <person name="French L."/>
            <person name="Steward C.A."/>
            <person name="Sims S.K."/>
            <person name="Jones M.C."/>
            <person name="Searle S."/>
            <person name="Scott C."/>
            <person name="Howe K."/>
            <person name="Hunt S.E."/>
            <person name="Andrews T.D."/>
            <person name="Gilbert J.G.R."/>
            <person name="Swarbreck D."/>
            <person name="Ashurst J.L."/>
            <person name="Taylor A."/>
            <person name="Battles J."/>
            <person name="Bird C.P."/>
            <person name="Ainscough R."/>
            <person name="Almeida J.P."/>
            <person name="Ashwell R.I.S."/>
            <person name="Ambrose K.D."/>
            <person name="Babbage A.K."/>
            <person name="Bagguley C.L."/>
            <person name="Bailey J."/>
            <person name="Banerjee R."/>
            <person name="Bates K."/>
            <person name="Beasley H."/>
            <person name="Bray-Allen S."/>
            <person name="Brown A.J."/>
            <person name="Brown J.Y."/>
            <person name="Burford D.C."/>
            <person name="Burrill W."/>
            <person name="Burton J."/>
            <person name="Cahill P."/>
            <person name="Camire D."/>
            <person name="Carter N.P."/>
            <person name="Chapman J.C."/>
            <person name="Clark S.Y."/>
            <person name="Clarke G."/>
            <person name="Clee C.M."/>
            <person name="Clegg S."/>
            <person name="Corby N."/>
            <person name="Coulson A."/>
            <person name="Dhami P."/>
            <person name="Dutta I."/>
            <person name="Dunn M."/>
            <person name="Faulkner L."/>
            <person name="Frankish A."/>
            <person name="Frankland J.A."/>
            <person name="Garner P."/>
            <person name="Garnett J."/>
            <person name="Gribble S."/>
            <person name="Griffiths C."/>
            <person name="Grocock R."/>
            <person name="Gustafson E."/>
            <person name="Hammond S."/>
            <person name="Harley J.L."/>
            <person name="Hart E."/>
            <person name="Heath P.D."/>
            <person name="Ho T.P."/>
            <person name="Hopkins B."/>
            <person name="Horne J."/>
            <person name="Howden P.J."/>
            <person name="Huckle E."/>
            <person name="Hynds C."/>
            <person name="Johnson C."/>
            <person name="Johnson D."/>
            <person name="Kana A."/>
            <person name="Kay M."/>
            <person name="Kimberley A.M."/>
            <person name="Kershaw J.K."/>
            <person name="Kokkinaki M."/>
            <person name="Laird G.K."/>
            <person name="Lawlor S."/>
            <person name="Lee H.M."/>
            <person name="Leongamornlert D.A."/>
            <person name="Laird G."/>
            <person name="Lloyd C."/>
            <person name="Lloyd D.M."/>
            <person name="Loveland J."/>
            <person name="Lovell J."/>
            <person name="McLaren S."/>
            <person name="McLay K.E."/>
            <person name="McMurray A."/>
            <person name="Mashreghi-Mohammadi M."/>
            <person name="Matthews L."/>
            <person name="Milne S."/>
            <person name="Nickerson T."/>
            <person name="Nguyen M."/>
            <person name="Overton-Larty E."/>
            <person name="Palmer S.A."/>
            <person name="Pearce A.V."/>
            <person name="Peck A.I."/>
            <person name="Pelan S."/>
            <person name="Phillimore B."/>
            <person name="Porter K."/>
            <person name="Rice C.M."/>
            <person name="Rogosin A."/>
            <person name="Ross M.T."/>
            <person name="Sarafidou T."/>
            <person name="Sehra H.K."/>
            <person name="Shownkeen R."/>
            <person name="Skuce C.D."/>
            <person name="Smith M."/>
            <person name="Standring L."/>
            <person name="Sycamore N."/>
            <person name="Tester J."/>
            <person name="Thorpe A."/>
            <person name="Torcasso W."/>
            <person name="Tracey A."/>
            <person name="Tromans A."/>
            <person name="Tsolas J."/>
            <person name="Wall M."/>
            <person name="Walsh J."/>
            <person name="Wang H."/>
            <person name="Weinstock K."/>
            <person name="West A.P."/>
            <person name="Willey D.L."/>
            <person name="Whitehead S.L."/>
            <person name="Wilming L."/>
            <person name="Wray P.W."/>
            <person name="Young L."/>
            <person name="Chen Y."/>
            <person name="Lovering R.C."/>
            <person name="Moschonas N.K."/>
            <person name="Siebert R."/>
            <person name="Fechtel K."/>
            <person name="Bentley D."/>
            <person name="Durbin R.M."/>
            <person name="Hubbard T."/>
            <person name="Doucette-Stamm L."/>
            <person name="Beck S."/>
            <person name="Smith D.R."/>
            <person name="Rogers J."/>
        </authorList>
    </citation>
    <scope>NUCLEOTIDE SEQUENCE [LARGE SCALE GENOMIC DNA]</scope>
</reference>
<reference key="6">
    <citation type="submission" date="2005-09" db="EMBL/GenBank/DDBJ databases">
        <authorList>
            <person name="Mural R.J."/>
            <person name="Istrail S."/>
            <person name="Sutton G.G."/>
            <person name="Florea L."/>
            <person name="Halpern A.L."/>
            <person name="Mobarry C.M."/>
            <person name="Lippert R."/>
            <person name="Walenz B."/>
            <person name="Shatkay H."/>
            <person name="Dew I."/>
            <person name="Miller J.R."/>
            <person name="Flanigan M.J."/>
            <person name="Edwards N.J."/>
            <person name="Bolanos R."/>
            <person name="Fasulo D."/>
            <person name="Halldorsson B.V."/>
            <person name="Hannenhalli S."/>
            <person name="Turner R."/>
            <person name="Yooseph S."/>
            <person name="Lu F."/>
            <person name="Nusskern D.R."/>
            <person name="Shue B.C."/>
            <person name="Zheng X.H."/>
            <person name="Zhong F."/>
            <person name="Delcher A.L."/>
            <person name="Huson D.H."/>
            <person name="Kravitz S.A."/>
            <person name="Mouchard L."/>
            <person name="Reinert K."/>
            <person name="Remington K.A."/>
            <person name="Clark A.G."/>
            <person name="Waterman M.S."/>
            <person name="Eichler E.E."/>
            <person name="Adams M.D."/>
            <person name="Hunkapiller M.W."/>
            <person name="Myers E.W."/>
            <person name="Venter J.C."/>
        </authorList>
    </citation>
    <scope>NUCLEOTIDE SEQUENCE [LARGE SCALE GENOMIC DNA]</scope>
</reference>
<reference key="7">
    <citation type="journal article" date="2004" name="Genome Res.">
        <title>The status, quality, and expansion of the NIH full-length cDNA project: the Mammalian Gene Collection (MGC).</title>
        <authorList>
            <consortium name="The MGC Project Team"/>
        </authorList>
    </citation>
    <scope>NUCLEOTIDE SEQUENCE [LARGE SCALE MRNA]</scope>
</reference>
<reference key="8">
    <citation type="journal article" date="2005" name="Cancer Res.">
        <title>Hsp70-like protein 1 fusion protein enhances induction of carcinoembryonic antigen-specific CD8+ CTL response by dendritic cell vaccine.</title>
        <authorList>
            <person name="Wu Y."/>
            <person name="Wan T."/>
            <person name="Zhou X."/>
            <person name="Wang B."/>
            <person name="Yang F."/>
            <person name="Li N."/>
            <person name="Chen G."/>
            <person name="Dai S."/>
            <person name="Liu S."/>
            <person name="Zhang M."/>
            <person name="Cao X."/>
        </authorList>
    </citation>
    <scope>IMMUNOADJUVANT ABILITY</scope>
</reference>
<reference key="9">
    <citation type="journal article" date="2005" name="Proc. Natl. Acad. Sci. U.S.A.">
        <title>The chaperones MPP11 and Hsp70L1 form the mammalian ribosome-associated complex.</title>
        <authorList>
            <person name="Otto H."/>
            <person name="Conz C."/>
            <person name="Maier P."/>
            <person name="Wolfle T."/>
            <person name="Suzuki C.K."/>
            <person name="Jeno P."/>
            <person name="Rucknagel P."/>
            <person name="Stahl J."/>
            <person name="Rospert S."/>
        </authorList>
    </citation>
    <scope>FUNCTION</scope>
    <scope>SUBCELLULAR LOCATION</scope>
    <scope>IDENTIFICATION IN THE RAC COMPLEX</scope>
    <scope>INTERACTION WITH DNAJC2</scope>
</reference>
<reference key="10">
    <citation type="journal article" date="2005" name="Science">
        <title>Human Mpp11 J protein: ribosome-tethered molecular chaperones are ubiquitous.</title>
        <authorList>
            <person name="Hundley H.A."/>
            <person name="Walter W."/>
            <person name="Bairstow S."/>
            <person name="Craig E.A."/>
        </authorList>
    </citation>
    <scope>IDENTIFICATION</scope>
</reference>
<reference key="11">
    <citation type="journal article" date="2008" name="Biochem. Biophys. Res. Commun.">
        <title>Protective effect of a RSV subunit vaccine candidate G1F/M2 was enhanced by a HSP70-Like protein in mice.</title>
        <authorList>
            <person name="Zeng R."/>
            <person name="Zhang Z."/>
            <person name="Mei X."/>
            <person name="Gong W."/>
            <person name="Wei L."/>
        </authorList>
    </citation>
    <scope>IMMUNOADJUVANT ABILITY</scope>
</reference>
<reference key="12">
    <citation type="journal article" date="2009" name="Sci. Signal.">
        <title>Quantitative phosphoproteomic analysis of T cell receptor signaling reveals system-wide modulation of protein-protein interactions.</title>
        <authorList>
            <person name="Mayya V."/>
            <person name="Lundgren D.H."/>
            <person name="Hwang S.-I."/>
            <person name="Rezaul K."/>
            <person name="Wu L."/>
            <person name="Eng J.K."/>
            <person name="Rodionov V."/>
            <person name="Han D.K."/>
        </authorList>
    </citation>
    <scope>IDENTIFICATION BY MASS SPECTROMETRY [LARGE SCALE ANALYSIS]</scope>
    <source>
        <tissue>Leukemic T-cell</tissue>
    </source>
</reference>
<reference key="13">
    <citation type="journal article" date="2011" name="BMC Syst. Biol.">
        <title>Initial characterization of the human central proteome.</title>
        <authorList>
            <person name="Burkard T.R."/>
            <person name="Planyavsky M."/>
            <person name="Kaupe I."/>
            <person name="Breitwieser F.P."/>
            <person name="Buerckstuemmer T."/>
            <person name="Bennett K.L."/>
            <person name="Superti-Furga G."/>
            <person name="Colinge J."/>
        </authorList>
    </citation>
    <scope>IDENTIFICATION BY MASS SPECTROMETRY [LARGE SCALE ANALYSIS]</scope>
</reference>
<reference key="14">
    <citation type="journal article" date="2014" name="J. Proteomics">
        <title>An enzyme assisted RP-RPLC approach for in-depth analysis of human liver phosphoproteome.</title>
        <authorList>
            <person name="Bian Y."/>
            <person name="Song C."/>
            <person name="Cheng K."/>
            <person name="Dong M."/>
            <person name="Wang F."/>
            <person name="Huang J."/>
            <person name="Sun D."/>
            <person name="Wang L."/>
            <person name="Ye M."/>
            <person name="Zou H."/>
        </authorList>
    </citation>
    <scope>IDENTIFICATION BY MASS SPECTROMETRY [LARGE SCALE ANALYSIS]</scope>
    <source>
        <tissue>Liver</tissue>
    </source>
</reference>
<reference key="15">
    <citation type="journal article" date="2006" name="Science">
        <title>The consensus coding sequences of human breast and colorectal cancers.</title>
        <authorList>
            <person name="Sjoeblom T."/>
            <person name="Jones S."/>
            <person name="Wood L.D."/>
            <person name="Parsons D.W."/>
            <person name="Lin J."/>
            <person name="Barber T.D."/>
            <person name="Mandelker D."/>
            <person name="Leary R.J."/>
            <person name="Ptak J."/>
            <person name="Silliman N."/>
            <person name="Szabo S."/>
            <person name="Buckhaults P."/>
            <person name="Farrell C."/>
            <person name="Meeh P."/>
            <person name="Markowitz S.D."/>
            <person name="Willis J."/>
            <person name="Dawson D."/>
            <person name="Willson J.K.V."/>
            <person name="Gazdar A.F."/>
            <person name="Hartigan J."/>
            <person name="Wu L."/>
            <person name="Liu C."/>
            <person name="Parmigiani G."/>
            <person name="Park B.H."/>
            <person name="Bachman K.E."/>
            <person name="Papadopoulos N."/>
            <person name="Vogelstein B."/>
            <person name="Kinzler K.W."/>
            <person name="Velculescu V.E."/>
        </authorList>
    </citation>
    <scope>VARIANT [LARGE SCALE ANALYSIS] VAL-85</scope>
</reference>
<proteinExistence type="evidence at protein level"/>
<organism>
    <name type="scientific">Homo sapiens</name>
    <name type="common">Human</name>
    <dbReference type="NCBI Taxonomy" id="9606"/>
    <lineage>
        <taxon>Eukaryota</taxon>
        <taxon>Metazoa</taxon>
        <taxon>Chordata</taxon>
        <taxon>Craniata</taxon>
        <taxon>Vertebrata</taxon>
        <taxon>Euteleostomi</taxon>
        <taxon>Mammalia</taxon>
        <taxon>Eutheria</taxon>
        <taxon>Euarchontoglires</taxon>
        <taxon>Primates</taxon>
        <taxon>Haplorrhini</taxon>
        <taxon>Catarrhini</taxon>
        <taxon>Hominidae</taxon>
        <taxon>Homo</taxon>
    </lineage>
</organism>
<name>HSP7E_HUMAN</name>
<comment type="function">
    <text evidence="1">Component of the ribosome-associated complex (RAC), a complex involved in folding or maintaining nascent polypeptides in a folding-competent state. In the RAC complex, binds to the nascent polypeptide chain, while DNAJC2 stimulates its ATPase activity.</text>
</comment>
<comment type="subunit">
    <text evidence="1">Component of ribosome-associated complex (RAC), a heterodimer composed of Hsp70/DnaK-type chaperone HSPA14 and Hsp40/DnaJ-type chaperone DNAJC2.</text>
</comment>
<comment type="interaction">
    <interactant intactId="EBI-8773684">
        <id>Q0VDF9</id>
    </interactant>
    <interactant intactId="EBI-11017224">
        <id>Q99543</id>
        <label>DNAJC2</label>
    </interactant>
    <organismsDiffer>false</organismsDiffer>
    <experiments>4</experiments>
</comment>
<comment type="interaction">
    <interactant intactId="EBI-8773684">
        <id>Q0VDF9</id>
    </interactant>
    <interactant intactId="EBI-11990542">
        <id>Q8NET5</id>
        <label>NFAM1</label>
    </interactant>
    <organismsDiffer>false</organismsDiffer>
    <experiments>2</experiments>
</comment>
<comment type="subcellular location">
    <subcellularLocation>
        <location evidence="1">Cytoplasm</location>
        <location evidence="1">Cytosol</location>
    </subcellularLocation>
</comment>
<comment type="miscellaneous">
    <text evidence="4 5">Acts as a potent immunoadjuvant, capable to interact with antigen-presenting cells and generating efficient CD8(+) T-cell responses. May be used as adjuvant to enhance effect of vaccine G1F/M2, a candidate vaccine against respiratory syncytial virus (RSV), a major respiratory pathogen in newborns (PubMed:18851947). May also be used as adjuvant to prepare antigenic fusion protein for the therapeutics of cancers (PubMed:15930317).</text>
</comment>
<comment type="similarity">
    <text evidence="3">Belongs to the heat shock protein 70 family.</text>
</comment>
<evidence type="ECO:0000269" key="1">
    <source>
    </source>
</evidence>
<evidence type="ECO:0000269" key="2">
    <source>
    </source>
</evidence>
<evidence type="ECO:0000305" key="3"/>
<evidence type="ECO:0000305" key="4">
    <source>
    </source>
</evidence>
<evidence type="ECO:0000305" key="5">
    <source>
    </source>
</evidence>
<dbReference type="EMBL" id="AF143723">
    <property type="protein sequence ID" value="AAF66640.1"/>
    <property type="molecule type" value="mRNA"/>
</dbReference>
<dbReference type="EMBL" id="AF112210">
    <property type="protein sequence ID" value="AAF17198.1"/>
    <property type="molecule type" value="mRNA"/>
</dbReference>
<dbReference type="EMBL" id="AK292323">
    <property type="protein sequence ID" value="BAF85012.1"/>
    <property type="molecule type" value="mRNA"/>
</dbReference>
<dbReference type="EMBL" id="EF444968">
    <property type="protein sequence ID" value="ACA05969.1"/>
    <property type="molecule type" value="Genomic_DNA"/>
</dbReference>
<dbReference type="EMBL" id="EF444968">
    <property type="protein sequence ID" value="ACA05970.1"/>
    <property type="molecule type" value="Genomic_DNA"/>
</dbReference>
<dbReference type="EMBL" id="AC069544">
    <property type="status" value="NOT_ANNOTATED_CDS"/>
    <property type="molecule type" value="Genomic_DNA"/>
</dbReference>
<dbReference type="EMBL" id="CH471072">
    <property type="protein sequence ID" value="EAW86258.1"/>
    <property type="molecule type" value="Genomic_DNA"/>
</dbReference>
<dbReference type="EMBL" id="BC119690">
    <property type="protein sequence ID" value="AAI19691.1"/>
    <property type="molecule type" value="mRNA"/>
</dbReference>
<dbReference type="CCDS" id="CCDS7103.1"/>
<dbReference type="RefSeq" id="NP_057383.2">
    <property type="nucleotide sequence ID" value="NM_016299.4"/>
</dbReference>
<dbReference type="SMR" id="Q0VDF9"/>
<dbReference type="BioGRID" id="119358">
    <property type="interactions" value="129"/>
</dbReference>
<dbReference type="ComplexPortal" id="CPX-2642">
    <property type="entry name" value="Ribosome-associated complex"/>
</dbReference>
<dbReference type="DIP" id="DIP-62114N"/>
<dbReference type="FunCoup" id="Q0VDF9">
    <property type="interactions" value="3089"/>
</dbReference>
<dbReference type="IntAct" id="Q0VDF9">
    <property type="interactions" value="54"/>
</dbReference>
<dbReference type="MINT" id="Q0VDF9"/>
<dbReference type="STRING" id="9606.ENSP00000367623"/>
<dbReference type="ChEMBL" id="CHEMBL5169146"/>
<dbReference type="GlyGen" id="Q0VDF9">
    <property type="glycosylation" value="2 sites, 1 N-linked glycan (1 site), 1 O-linked glycan (1 site)"/>
</dbReference>
<dbReference type="iPTMnet" id="Q0VDF9"/>
<dbReference type="PhosphoSitePlus" id="Q0VDF9"/>
<dbReference type="SwissPalm" id="Q0VDF9"/>
<dbReference type="BioMuta" id="HSPA14"/>
<dbReference type="DMDM" id="121948121"/>
<dbReference type="jPOST" id="Q0VDF9"/>
<dbReference type="MassIVE" id="Q0VDF9"/>
<dbReference type="PaxDb" id="9606-ENSP00000367623"/>
<dbReference type="PeptideAtlas" id="Q0VDF9"/>
<dbReference type="ProteomicsDB" id="58825"/>
<dbReference type="Pumba" id="Q0VDF9"/>
<dbReference type="Antibodypedia" id="37843">
    <property type="antibodies" value="148 antibodies from 28 providers"/>
</dbReference>
<dbReference type="DNASU" id="51182"/>
<dbReference type="Ensembl" id="ENST00000378372.8">
    <property type="protein sequence ID" value="ENSP00000367623.3"/>
    <property type="gene ID" value="ENSG00000187522.16"/>
</dbReference>
<dbReference type="GeneID" id="51182"/>
<dbReference type="KEGG" id="hsa:51182"/>
<dbReference type="MANE-Select" id="ENST00000378372.8">
    <property type="protein sequence ID" value="ENSP00000367623.3"/>
    <property type="RefSeq nucleotide sequence ID" value="NM_016299.4"/>
    <property type="RefSeq protein sequence ID" value="NP_057383.2"/>
</dbReference>
<dbReference type="UCSC" id="uc001inf.5">
    <property type="organism name" value="human"/>
</dbReference>
<dbReference type="AGR" id="HGNC:29526"/>
<dbReference type="CTD" id="51182"/>
<dbReference type="DisGeNET" id="51182"/>
<dbReference type="GeneCards" id="HSPA14"/>
<dbReference type="HGNC" id="HGNC:29526">
    <property type="gene designation" value="HSPA14"/>
</dbReference>
<dbReference type="HPA" id="ENSG00000187522">
    <property type="expression patterns" value="Low tissue specificity"/>
</dbReference>
<dbReference type="MIM" id="610369">
    <property type="type" value="gene"/>
</dbReference>
<dbReference type="neXtProt" id="NX_Q0VDF9"/>
<dbReference type="OpenTargets" id="ENSG00000187522"/>
<dbReference type="PharmGKB" id="PA134979057"/>
<dbReference type="VEuPathDB" id="HostDB:ENSG00000187522"/>
<dbReference type="eggNOG" id="KOG0101">
    <property type="taxonomic scope" value="Eukaryota"/>
</dbReference>
<dbReference type="GeneTree" id="ENSGT00940000156380"/>
<dbReference type="HOGENOM" id="CLU_005965_0_3_1"/>
<dbReference type="InParanoid" id="Q0VDF9"/>
<dbReference type="OMA" id="GSTCACA"/>
<dbReference type="OrthoDB" id="29851at2759"/>
<dbReference type="PAN-GO" id="Q0VDF9">
    <property type="GO annotations" value="15 GO annotations based on evolutionary models"/>
</dbReference>
<dbReference type="PhylomeDB" id="Q0VDF9"/>
<dbReference type="TreeFam" id="TF105045"/>
<dbReference type="PathwayCommons" id="Q0VDF9"/>
<dbReference type="Reactome" id="R-HSA-3371453">
    <property type="pathway name" value="Regulation of HSF1-mediated heat shock response"/>
</dbReference>
<dbReference type="SignaLink" id="Q0VDF9"/>
<dbReference type="BioGRID-ORCS" id="51182">
    <property type="hits" value="303 hits in 1167 CRISPR screens"/>
</dbReference>
<dbReference type="ChiTaRS" id="HSPA14">
    <property type="organism name" value="human"/>
</dbReference>
<dbReference type="GeneWiki" id="HSPA14"/>
<dbReference type="GenomeRNAi" id="51182"/>
<dbReference type="Pharos" id="Q0VDF9">
    <property type="development level" value="Tbio"/>
</dbReference>
<dbReference type="PRO" id="PR:Q0VDF9"/>
<dbReference type="Proteomes" id="UP000005640">
    <property type="component" value="Chromosome 10"/>
</dbReference>
<dbReference type="RNAct" id="Q0VDF9">
    <property type="molecule type" value="protein"/>
</dbReference>
<dbReference type="Bgee" id="ENSG00000187522">
    <property type="expression patterns" value="Expressed in secondary oocyte and 194 other cell types or tissues"/>
</dbReference>
<dbReference type="ExpressionAtlas" id="Q0VDF9">
    <property type="expression patterns" value="baseline and differential"/>
</dbReference>
<dbReference type="GO" id="GO:0005737">
    <property type="term" value="C:cytoplasm"/>
    <property type="evidence" value="ECO:0000318"/>
    <property type="project" value="GO_Central"/>
</dbReference>
<dbReference type="GO" id="GO:0005829">
    <property type="term" value="C:cytosol"/>
    <property type="evidence" value="ECO:0000314"/>
    <property type="project" value="UniProtKB"/>
</dbReference>
<dbReference type="GO" id="GO:0016020">
    <property type="term" value="C:membrane"/>
    <property type="evidence" value="ECO:0007005"/>
    <property type="project" value="UniProtKB"/>
</dbReference>
<dbReference type="GO" id="GO:0005634">
    <property type="term" value="C:nucleus"/>
    <property type="evidence" value="ECO:0000318"/>
    <property type="project" value="GO_Central"/>
</dbReference>
<dbReference type="GO" id="GO:0005886">
    <property type="term" value="C:plasma membrane"/>
    <property type="evidence" value="ECO:0000318"/>
    <property type="project" value="GO_Central"/>
</dbReference>
<dbReference type="GO" id="GO:0005524">
    <property type="term" value="F:ATP binding"/>
    <property type="evidence" value="ECO:0007669"/>
    <property type="project" value="UniProtKB-KW"/>
</dbReference>
<dbReference type="GO" id="GO:0016887">
    <property type="term" value="F:ATP hydrolysis activity"/>
    <property type="evidence" value="ECO:0000318"/>
    <property type="project" value="GO_Central"/>
</dbReference>
<dbReference type="GO" id="GO:0140662">
    <property type="term" value="F:ATP-dependent protein folding chaperone"/>
    <property type="evidence" value="ECO:0007669"/>
    <property type="project" value="InterPro"/>
</dbReference>
<dbReference type="GO" id="GO:0031072">
    <property type="term" value="F:heat shock protein binding"/>
    <property type="evidence" value="ECO:0000318"/>
    <property type="project" value="GO_Central"/>
</dbReference>
<dbReference type="GO" id="GO:0044183">
    <property type="term" value="F:protein folding chaperone"/>
    <property type="evidence" value="ECO:0000318"/>
    <property type="project" value="GO_Central"/>
</dbReference>
<dbReference type="GO" id="GO:0051083">
    <property type="term" value="P:'de novo' cotranslational protein folding"/>
    <property type="evidence" value="ECO:0000304"/>
    <property type="project" value="UniProtKB"/>
</dbReference>
<dbReference type="GO" id="GO:0051085">
    <property type="term" value="P:chaperone cofactor-dependent protein refolding"/>
    <property type="evidence" value="ECO:0000318"/>
    <property type="project" value="GO_Central"/>
</dbReference>
<dbReference type="GO" id="GO:0042026">
    <property type="term" value="P:protein refolding"/>
    <property type="evidence" value="ECO:0000318"/>
    <property type="project" value="GO_Central"/>
</dbReference>
<dbReference type="CDD" id="cd10238">
    <property type="entry name" value="ASKHA_NBD_HSP70_HSPA14"/>
    <property type="match status" value="1"/>
</dbReference>
<dbReference type="FunFam" id="2.60.34.10:FF:000013">
    <property type="entry name" value="Heat shock 70 kDa protein 14"/>
    <property type="match status" value="1"/>
</dbReference>
<dbReference type="FunFam" id="3.30.30.30:FF:000008">
    <property type="entry name" value="heat shock 70 kDa protein 14"/>
    <property type="match status" value="1"/>
</dbReference>
<dbReference type="FunFam" id="3.90.640.10:FF:000010">
    <property type="entry name" value="heat shock 70 kDa protein 14"/>
    <property type="match status" value="1"/>
</dbReference>
<dbReference type="FunFam" id="3.30.420.40:FF:000171">
    <property type="entry name" value="Heat shock 70 kDa protein 4"/>
    <property type="match status" value="1"/>
</dbReference>
<dbReference type="FunFam" id="3.30.420.40:FF:000433">
    <property type="entry name" value="Heat shock protein family A (Hsp70) member 14"/>
    <property type="match status" value="1"/>
</dbReference>
<dbReference type="Gene3D" id="3.30.30.30">
    <property type="match status" value="1"/>
</dbReference>
<dbReference type="Gene3D" id="3.30.420.40">
    <property type="match status" value="2"/>
</dbReference>
<dbReference type="Gene3D" id="3.90.640.10">
    <property type="entry name" value="Actin, Chain A, domain 4"/>
    <property type="match status" value="1"/>
</dbReference>
<dbReference type="Gene3D" id="2.60.34.10">
    <property type="entry name" value="Substrate Binding Domain Of DNAk, Chain A, domain 1"/>
    <property type="match status" value="1"/>
</dbReference>
<dbReference type="InterPro" id="IPR043129">
    <property type="entry name" value="ATPase_NBD"/>
</dbReference>
<dbReference type="InterPro" id="IPR018181">
    <property type="entry name" value="Heat_shock_70_CS"/>
</dbReference>
<dbReference type="InterPro" id="IPR029047">
    <property type="entry name" value="HSP70_peptide-bd_sf"/>
</dbReference>
<dbReference type="InterPro" id="IPR013126">
    <property type="entry name" value="Hsp_70_fam"/>
</dbReference>
<dbReference type="InterPro" id="IPR042049">
    <property type="entry name" value="HSPA14_NBD"/>
</dbReference>
<dbReference type="PANTHER" id="PTHR19375">
    <property type="entry name" value="HEAT SHOCK PROTEIN 70KDA"/>
    <property type="match status" value="1"/>
</dbReference>
<dbReference type="Pfam" id="PF00012">
    <property type="entry name" value="HSP70"/>
    <property type="match status" value="1"/>
</dbReference>
<dbReference type="PRINTS" id="PR00301">
    <property type="entry name" value="HEATSHOCK70"/>
</dbReference>
<dbReference type="SUPFAM" id="SSF53067">
    <property type="entry name" value="Actin-like ATPase domain"/>
    <property type="match status" value="2"/>
</dbReference>
<dbReference type="SUPFAM" id="SSF100920">
    <property type="entry name" value="Heat shock protein 70kD (HSP70), peptide-binding domain"/>
    <property type="match status" value="1"/>
</dbReference>
<dbReference type="PROSITE" id="PS01036">
    <property type="entry name" value="HSP70_3"/>
    <property type="match status" value="1"/>
</dbReference>
<gene>
    <name type="primary">HSPA14</name>
    <name type="synonym">HSP60</name>
    <name type="synonym">HSP70L1</name>
</gene>
<sequence length="509" mass="54794">MAAIGVHLGCTSACVAVYKDGRAGVVANDAGDRVTPAVVAYSENEEIVGLAAKQSRIRNISNTVMKVKQILGRSSSDPQAQKYIAESKCLVIEKNGKLRYEIDTGEETKFVNPEDVARLIFSKMKETAHSVLGSDANDVVITVPFDFGEKQKNALGEAARAAGFNVLRLIHEPSAALLAYGIGQDSPTGKSNILVFKLGGTSLSLSVMEVNSGIYRVLSTNTDDNIGGAHFTETLAQYLASEFQRSFKHDVRGNARAMMKLTNSAEVAKHSLSTLGSANCFLDSLYEGQDFDCNVSRARFELLCSPLFNKCIEAIRGLLDQNGFTADDINKVVLCGGSSRIPKLQQLIKDLFPAVELLNSIPPDEVIPIGAAIEAGILIGKENLLVEDSLMIECSARDILVKGVDESGASRFTVLFPSGTPLPARRQHTLQAPGSISSVCLELYESDGKNSAKEETKFAQVVLQDLDKKENGLRDILAVLTMKRDGSLHVTCTDQETGKCEAISIEIAS</sequence>
<protein>
    <recommendedName>
        <fullName>Heat shock 70 kDa protein 14</fullName>
    </recommendedName>
    <alternativeName>
        <fullName>HSP70-like protein 1</fullName>
    </alternativeName>
    <alternativeName>
        <fullName>Heat shock protein HSP60</fullName>
    </alternativeName>
    <alternativeName>
        <fullName>Heat shock protein family A member 14</fullName>
    </alternativeName>
</protein>
<feature type="chain" id="PRO_0000289946" description="Heat shock 70 kDa protein 14">
    <location>
        <begin position="1"/>
        <end position="509"/>
    </location>
</feature>
<feature type="sequence variant" id="VAR_036347" description="In a breast cancer sample; somatic mutation; dbSNP:rs374837716." evidence="2">
    <original>A</original>
    <variation>V</variation>
    <location>
        <position position="85"/>
    </location>
</feature>
<feature type="sequence conflict" description="In Ref. 3; BAF85012." evidence="3" ref="3">
    <original>V</original>
    <variation>A</variation>
    <location>
        <position position="6"/>
    </location>
</feature>
<feature type="sequence conflict" description="In Ref. 1; AAF66640." evidence="3" ref="1">
    <original>V</original>
    <variation>E</variation>
    <location>
        <position position="15"/>
    </location>
</feature>
<feature type="sequence conflict" description="In Ref. 2; AAF17198." evidence="3" ref="2">
    <original>L</original>
    <variation>P</variation>
    <location>
        <position position="282"/>
    </location>
</feature>
<feature type="sequence conflict" description="In Ref. 2; AAF17198." evidence="3" ref="2">
    <original>I</original>
    <variation>L</variation>
    <location>
        <position position="312"/>
    </location>
</feature>
<feature type="sequence conflict" description="In Ref. 3; BAF85012." evidence="3" ref="3">
    <original>D</original>
    <variation>G</variation>
    <location>
        <position position="350"/>
    </location>
</feature>